<protein>
    <recommendedName>
        <fullName>Uncharacterized protein YEL073C</fullName>
    </recommendedName>
</protein>
<proteinExistence type="predicted"/>
<dbReference type="EMBL" id="U18795">
    <property type="protein sequence ID" value="AAB65014.1"/>
    <property type="molecule type" value="Genomic_DNA"/>
</dbReference>
<dbReference type="EMBL" id="AY558446">
    <property type="protein sequence ID" value="AAS56772.1"/>
    <property type="molecule type" value="Genomic_DNA"/>
</dbReference>
<dbReference type="EMBL" id="BK006939">
    <property type="protein sequence ID" value="DAA07582.1"/>
    <property type="molecule type" value="Genomic_DNA"/>
</dbReference>
<dbReference type="PIR" id="S50516">
    <property type="entry name" value="S50516"/>
</dbReference>
<dbReference type="RefSeq" id="NP_010841.1">
    <property type="nucleotide sequence ID" value="NM_001178888.1"/>
</dbReference>
<dbReference type="BioGRID" id="36658">
    <property type="interactions" value="25"/>
</dbReference>
<dbReference type="FunCoup" id="P39974">
    <property type="interactions" value="43"/>
</dbReference>
<dbReference type="IntAct" id="P39974">
    <property type="interactions" value="1"/>
</dbReference>
<dbReference type="STRING" id="4932.YEL073C"/>
<dbReference type="PaxDb" id="4932-YEL073C"/>
<dbReference type="PeptideAtlas" id="P39974"/>
<dbReference type="EnsemblFungi" id="YEL073C_mRNA">
    <property type="protein sequence ID" value="YEL073C"/>
    <property type="gene ID" value="YEL073C"/>
</dbReference>
<dbReference type="GeneID" id="856636"/>
<dbReference type="KEGG" id="sce:YEL073C"/>
<dbReference type="AGR" id="SGD:S000000799"/>
<dbReference type="SGD" id="S000000799">
    <property type="gene designation" value="YEL073C"/>
</dbReference>
<dbReference type="VEuPathDB" id="FungiDB:YEL073C"/>
<dbReference type="HOGENOM" id="CLU_2211455_0_0_1"/>
<dbReference type="InParanoid" id="P39974"/>
<dbReference type="OrthoDB" id="4050020at2759"/>
<dbReference type="BioCyc" id="YEAST:G3O-30187-MONOMER"/>
<dbReference type="BioGRID-ORCS" id="856636">
    <property type="hits" value="0 hits in 10 CRISPR screens"/>
</dbReference>
<dbReference type="PRO" id="PR:P39974"/>
<dbReference type="Proteomes" id="UP000002311">
    <property type="component" value="Chromosome V"/>
</dbReference>
<dbReference type="RNAct" id="P39974">
    <property type="molecule type" value="protein"/>
</dbReference>
<sequence length="107" mass="11960">MVNLANVLTNATAATLSAWSNTVPLETYFHFDEASGFGDYYLNVSVIWMNETLYETRIVPAIINVREWLDHMEANDPSPSVTNPYETSGYYAFSTVVPVLMGNMKVA</sequence>
<accession>P39974</accession>
<accession>D3DLH8</accession>
<gene>
    <name type="ordered locus">YEL073C</name>
</gene>
<organism>
    <name type="scientific">Saccharomyces cerevisiae (strain ATCC 204508 / S288c)</name>
    <name type="common">Baker's yeast</name>
    <dbReference type="NCBI Taxonomy" id="559292"/>
    <lineage>
        <taxon>Eukaryota</taxon>
        <taxon>Fungi</taxon>
        <taxon>Dikarya</taxon>
        <taxon>Ascomycota</taxon>
        <taxon>Saccharomycotina</taxon>
        <taxon>Saccharomycetes</taxon>
        <taxon>Saccharomycetales</taxon>
        <taxon>Saccharomycetaceae</taxon>
        <taxon>Saccharomyces</taxon>
    </lineage>
</organism>
<feature type="chain" id="PRO_0000202599" description="Uncharacterized protein YEL073C">
    <location>
        <begin position="1"/>
        <end position="107"/>
    </location>
</feature>
<keyword id="KW-1185">Reference proteome</keyword>
<name>YEI3_YEAST</name>
<reference key="1">
    <citation type="journal article" date="1997" name="Nature">
        <title>The nucleotide sequence of Saccharomyces cerevisiae chromosome V.</title>
        <authorList>
            <person name="Dietrich F.S."/>
            <person name="Mulligan J.T."/>
            <person name="Hennessy K.M."/>
            <person name="Yelton M.A."/>
            <person name="Allen E."/>
            <person name="Araujo R."/>
            <person name="Aviles E."/>
            <person name="Berno A."/>
            <person name="Brennan T."/>
            <person name="Carpenter J."/>
            <person name="Chen E."/>
            <person name="Cherry J.M."/>
            <person name="Chung E."/>
            <person name="Duncan M."/>
            <person name="Guzman E."/>
            <person name="Hartzell G."/>
            <person name="Hunicke-Smith S."/>
            <person name="Hyman R.W."/>
            <person name="Kayser A."/>
            <person name="Komp C."/>
            <person name="Lashkari D."/>
            <person name="Lew H."/>
            <person name="Lin D."/>
            <person name="Mosedale D."/>
            <person name="Nakahara K."/>
            <person name="Namath A."/>
            <person name="Norgren R."/>
            <person name="Oefner P."/>
            <person name="Oh C."/>
            <person name="Petel F.X."/>
            <person name="Roberts D."/>
            <person name="Sehl P."/>
            <person name="Schramm S."/>
            <person name="Shogren T."/>
            <person name="Smith V."/>
            <person name="Taylor P."/>
            <person name="Wei Y."/>
            <person name="Botstein D."/>
            <person name="Davis R.W."/>
        </authorList>
    </citation>
    <scope>NUCLEOTIDE SEQUENCE [LARGE SCALE GENOMIC DNA]</scope>
    <source>
        <strain>ATCC 204508 / S288c</strain>
    </source>
</reference>
<reference key="2">
    <citation type="journal article" date="2014" name="G3 (Bethesda)">
        <title>The reference genome sequence of Saccharomyces cerevisiae: Then and now.</title>
        <authorList>
            <person name="Engel S.R."/>
            <person name="Dietrich F.S."/>
            <person name="Fisk D.G."/>
            <person name="Binkley G."/>
            <person name="Balakrishnan R."/>
            <person name="Costanzo M.C."/>
            <person name="Dwight S.S."/>
            <person name="Hitz B.C."/>
            <person name="Karra K."/>
            <person name="Nash R.S."/>
            <person name="Weng S."/>
            <person name="Wong E.D."/>
            <person name="Lloyd P."/>
            <person name="Skrzypek M.S."/>
            <person name="Miyasato S.R."/>
            <person name="Simison M."/>
            <person name="Cherry J.M."/>
        </authorList>
    </citation>
    <scope>GENOME REANNOTATION</scope>
    <source>
        <strain>ATCC 204508 / S288c</strain>
    </source>
</reference>
<reference key="3">
    <citation type="journal article" date="2007" name="Genome Res.">
        <title>Approaching a complete repository of sequence-verified protein-encoding clones for Saccharomyces cerevisiae.</title>
        <authorList>
            <person name="Hu Y."/>
            <person name="Rolfs A."/>
            <person name="Bhullar B."/>
            <person name="Murthy T.V.S."/>
            <person name="Zhu C."/>
            <person name="Berger M.F."/>
            <person name="Camargo A.A."/>
            <person name="Kelley F."/>
            <person name="McCarron S."/>
            <person name="Jepson D."/>
            <person name="Richardson A."/>
            <person name="Raphael J."/>
            <person name="Moreira D."/>
            <person name="Taycher E."/>
            <person name="Zuo D."/>
            <person name="Mohr S."/>
            <person name="Kane M.F."/>
            <person name="Williamson J."/>
            <person name="Simpson A.J.G."/>
            <person name="Bulyk M.L."/>
            <person name="Harlow E."/>
            <person name="Marsischky G."/>
            <person name="Kolodner R.D."/>
            <person name="LaBaer J."/>
        </authorList>
    </citation>
    <scope>NUCLEOTIDE SEQUENCE [GENOMIC DNA]</scope>
    <source>
        <strain>ATCC 204508 / S288c</strain>
    </source>
</reference>